<dbReference type="EC" id="2.4.2.-" evidence="1"/>
<dbReference type="EMBL" id="CP001687">
    <property type="protein sequence ID" value="ACV10744.1"/>
    <property type="molecule type" value="Genomic_DNA"/>
</dbReference>
<dbReference type="SMR" id="C7NST3"/>
<dbReference type="STRING" id="519442.Huta_0557"/>
<dbReference type="GeneID" id="8382824"/>
<dbReference type="KEGG" id="hut:Huta_0557"/>
<dbReference type="eggNOG" id="arCOG00030">
    <property type="taxonomic scope" value="Archaea"/>
</dbReference>
<dbReference type="HOGENOM" id="CLU_126376_0_0_2"/>
<dbReference type="OrthoDB" id="8323at2157"/>
<dbReference type="Proteomes" id="UP000002071">
    <property type="component" value="Chromosome"/>
</dbReference>
<dbReference type="GO" id="GO:0016740">
    <property type="term" value="F:transferase activity"/>
    <property type="evidence" value="ECO:0007669"/>
    <property type="project" value="UniProtKB-KW"/>
</dbReference>
<dbReference type="GO" id="GO:0006166">
    <property type="term" value="P:purine ribonucleoside salvage"/>
    <property type="evidence" value="ECO:0007669"/>
    <property type="project" value="UniProtKB-KW"/>
</dbReference>
<dbReference type="CDD" id="cd06223">
    <property type="entry name" value="PRTases_typeI"/>
    <property type="match status" value="1"/>
</dbReference>
<dbReference type="Gene3D" id="3.40.50.2020">
    <property type="match status" value="1"/>
</dbReference>
<dbReference type="HAMAP" id="MF_01467">
    <property type="entry name" value="Hypx_phosphoribosyltr"/>
    <property type="match status" value="1"/>
</dbReference>
<dbReference type="InterPro" id="IPR026597">
    <property type="entry name" value="HGPRTase-like"/>
</dbReference>
<dbReference type="InterPro" id="IPR000836">
    <property type="entry name" value="PRibTrfase_dom"/>
</dbReference>
<dbReference type="InterPro" id="IPR029057">
    <property type="entry name" value="PRTase-like"/>
</dbReference>
<dbReference type="InterPro" id="IPR050118">
    <property type="entry name" value="Pur/Pyrimidine_PRTase"/>
</dbReference>
<dbReference type="NCBIfam" id="NF040646">
    <property type="entry name" value="HPT_Archaea"/>
    <property type="match status" value="1"/>
</dbReference>
<dbReference type="NCBIfam" id="NF002635">
    <property type="entry name" value="PRK02304.1-4"/>
    <property type="match status" value="1"/>
</dbReference>
<dbReference type="PANTHER" id="PTHR43864">
    <property type="entry name" value="HYPOXANTHINE/GUANINE PHOSPHORIBOSYLTRANSFERASE"/>
    <property type="match status" value="1"/>
</dbReference>
<dbReference type="PANTHER" id="PTHR43864:SF1">
    <property type="entry name" value="XANTHINE PHOSPHORIBOSYLTRANSFERASE"/>
    <property type="match status" value="1"/>
</dbReference>
<dbReference type="Pfam" id="PF00156">
    <property type="entry name" value="Pribosyltran"/>
    <property type="match status" value="1"/>
</dbReference>
<dbReference type="SUPFAM" id="SSF53271">
    <property type="entry name" value="PRTase-like"/>
    <property type="match status" value="1"/>
</dbReference>
<dbReference type="PROSITE" id="PS00103">
    <property type="entry name" value="PUR_PYR_PR_TRANSFER"/>
    <property type="match status" value="1"/>
</dbReference>
<keyword id="KW-0660">Purine salvage</keyword>
<keyword id="KW-1185">Reference proteome</keyword>
<keyword id="KW-0808">Transferase</keyword>
<proteinExistence type="inferred from homology"/>
<organism>
    <name type="scientific">Halorhabdus utahensis (strain DSM 12940 / JCM 11049 / AX-2)</name>
    <dbReference type="NCBI Taxonomy" id="519442"/>
    <lineage>
        <taxon>Archaea</taxon>
        <taxon>Methanobacteriati</taxon>
        <taxon>Methanobacteriota</taxon>
        <taxon>Stenosarchaea group</taxon>
        <taxon>Halobacteria</taxon>
        <taxon>Halobacteriales</taxon>
        <taxon>Haloarculaceae</taxon>
        <taxon>Halorhabdus</taxon>
    </lineage>
</organism>
<name>HPRL_HALUD</name>
<evidence type="ECO:0000255" key="1">
    <source>
        <dbReference type="HAMAP-Rule" id="MF_01467"/>
    </source>
</evidence>
<gene>
    <name type="ordered locus">Huta_0557</name>
</gene>
<feature type="chain" id="PRO_0000415458" description="HGPRTase-like protein">
    <location>
        <begin position="1"/>
        <end position="189"/>
    </location>
</feature>
<accession>C7NST3</accession>
<comment type="function">
    <text evidence="1">May catalyze a purine salvage reaction, the substrate is unknown.</text>
</comment>
<comment type="similarity">
    <text evidence="1">Belongs to the purine/pyrimidine phosphoribosyltransferase family. Archaeal HPRT subfamily.</text>
</comment>
<sequence length="189" mass="20815">MDRLKQSLLDAPVIEKEEYQYFVHPISDGVPMLRPELLREIVIRIIRKAELEDVDKIVTPAAMGIHISTAVSLMTDIPLVVIRKRQYGLEGEVSLQQVTGYSESEMYVNDVYEGDKVLVLDDVLSTGGTLAGITGALEEIGAEIVDIVAVIKKVGGENKIDDSDFDVKTLINVDVEDMEVIIVDEQGDG</sequence>
<protein>
    <recommendedName>
        <fullName evidence="1">HGPRTase-like protein</fullName>
        <ecNumber evidence="1">2.4.2.-</ecNumber>
    </recommendedName>
</protein>
<reference key="1">
    <citation type="journal article" date="2009" name="Stand. Genomic Sci.">
        <title>Complete genome sequence of Halorhabdus utahensis type strain (AX-2).</title>
        <authorList>
            <person name="Anderson I."/>
            <person name="Tindall B.J."/>
            <person name="Pomrenke H."/>
            <person name="Goker M."/>
            <person name="Lapidus A."/>
            <person name="Nolan M."/>
            <person name="Copeland A."/>
            <person name="Glavina Del Rio T."/>
            <person name="Chen F."/>
            <person name="Tice H."/>
            <person name="Cheng J.F."/>
            <person name="Lucas S."/>
            <person name="Chertkov O."/>
            <person name="Bruce D."/>
            <person name="Brettin T."/>
            <person name="Detter J.C."/>
            <person name="Han C."/>
            <person name="Goodwin L."/>
            <person name="Land M."/>
            <person name="Hauser L."/>
            <person name="Chang Y.J."/>
            <person name="Jeffries C.D."/>
            <person name="Pitluck S."/>
            <person name="Pati A."/>
            <person name="Mavromatis K."/>
            <person name="Ivanova N."/>
            <person name="Ovchinnikova G."/>
            <person name="Chen A."/>
            <person name="Palaniappan K."/>
            <person name="Chain P."/>
            <person name="Rohde M."/>
            <person name="Bristow J."/>
            <person name="Eisen J.A."/>
            <person name="Markowitz V."/>
            <person name="Hugenholtz P."/>
            <person name="Kyrpides N.C."/>
            <person name="Klenk H.P."/>
        </authorList>
    </citation>
    <scope>NUCLEOTIDE SEQUENCE [LARGE SCALE GENOMIC DNA]</scope>
    <source>
        <strain>DSM 12940 / JCM 11049 / AX-2</strain>
    </source>
</reference>